<comment type="function">
    <text evidence="1">F(1)F(0) ATP synthase produces ATP from ADP in the presence of a proton or sodium gradient. F-type ATPases consist of two structural domains, F(1) containing the extramembraneous catalytic core and F(0) containing the membrane proton channel, linked together by a central stalk and a peripheral stalk. During catalysis, ATP synthesis in the catalytic domain of F(1) is coupled via a rotary mechanism of the central stalk subunits to proton translocation.</text>
</comment>
<comment type="function">
    <text evidence="1">Key component of the F(0) channel; it plays a direct role in translocation across the membrane. A homomeric c-ring of between 10-14 subunits forms the central stalk rotor element with the F(1) delta and epsilon subunits.</text>
</comment>
<comment type="subunit">
    <text evidence="1">F-type ATPases have 2 components, F(1) - the catalytic core - and F(0) - the membrane proton channel. F(1) has five subunits: alpha(3), beta(3), gamma(1), delta(1), epsilon(1). F(0) has three main subunits: a(1), b(2) and c(10-14). The alpha and beta chains form an alternating ring which encloses part of the gamma chain. F(1) is attached to F(0) by a central stalk formed by the gamma and epsilon chains, while a peripheral stalk is formed by the delta and b chains.</text>
</comment>
<comment type="subcellular location">
    <subcellularLocation>
        <location evidence="1">Cell membrane</location>
        <topology evidence="1">Multi-pass membrane protein</topology>
    </subcellularLocation>
</comment>
<comment type="similarity">
    <text evidence="1">Belongs to the ATPase C chain family.</text>
</comment>
<keyword id="KW-0066">ATP synthesis</keyword>
<keyword id="KW-1003">Cell membrane</keyword>
<keyword id="KW-0138">CF(0)</keyword>
<keyword id="KW-0375">Hydrogen ion transport</keyword>
<keyword id="KW-0406">Ion transport</keyword>
<keyword id="KW-0446">Lipid-binding</keyword>
<keyword id="KW-0472">Membrane</keyword>
<keyword id="KW-0812">Transmembrane</keyword>
<keyword id="KW-1133">Transmembrane helix</keyword>
<keyword id="KW-0813">Transport</keyword>
<name>ATPL_MYCBT</name>
<evidence type="ECO:0000255" key="1">
    <source>
        <dbReference type="HAMAP-Rule" id="MF_01396"/>
    </source>
</evidence>
<organism>
    <name type="scientific">Mycobacterium bovis (strain BCG / Tokyo 172 / ATCC 35737 / TMC 1019)</name>
    <dbReference type="NCBI Taxonomy" id="561275"/>
    <lineage>
        <taxon>Bacteria</taxon>
        <taxon>Bacillati</taxon>
        <taxon>Actinomycetota</taxon>
        <taxon>Actinomycetes</taxon>
        <taxon>Mycobacteriales</taxon>
        <taxon>Mycobacteriaceae</taxon>
        <taxon>Mycobacterium</taxon>
        <taxon>Mycobacterium tuberculosis complex</taxon>
    </lineage>
</organism>
<gene>
    <name evidence="1" type="primary">atpE</name>
    <name type="ordered locus">JTY_1340</name>
</gene>
<protein>
    <recommendedName>
        <fullName evidence="1">ATP synthase subunit c</fullName>
    </recommendedName>
    <alternativeName>
        <fullName evidence="1">ATP synthase F(0) sector subunit c</fullName>
    </alternativeName>
    <alternativeName>
        <fullName evidence="1">F-type ATPase subunit c</fullName>
        <shortName evidence="1">F-ATPase subunit c</shortName>
    </alternativeName>
    <alternativeName>
        <fullName evidence="1">Lipid-binding protein</fullName>
    </alternativeName>
</protein>
<proteinExistence type="inferred from homology"/>
<accession>C1AMU9</accession>
<feature type="chain" id="PRO_1000184414" description="ATP synthase subunit c">
    <location>
        <begin position="1"/>
        <end position="81"/>
    </location>
</feature>
<feature type="transmembrane region" description="Helical" evidence="1">
    <location>
        <begin position="5"/>
        <end position="25"/>
    </location>
</feature>
<feature type="transmembrane region" description="Helical" evidence="1">
    <location>
        <begin position="57"/>
        <end position="77"/>
    </location>
</feature>
<feature type="site" description="Reversibly protonated during proton transport" evidence="1">
    <location>
        <position position="61"/>
    </location>
</feature>
<sequence length="81" mass="8055">MDPTIAAGALIGGGLIMAGGAIGAGIGDGVAGNALISGVARQPEAQGRLFTPFFITVGLVEAAYFINLAFMALFVFATPVK</sequence>
<reference key="1">
    <citation type="journal article" date="2009" name="Vaccine">
        <title>Whole genome sequence analysis of Mycobacterium bovis bacillus Calmette-Guerin (BCG) Tokyo 172: a comparative study of BCG vaccine substrains.</title>
        <authorList>
            <person name="Seki M."/>
            <person name="Honda I."/>
            <person name="Fujita I."/>
            <person name="Yano I."/>
            <person name="Yamamoto S."/>
            <person name="Koyama A."/>
        </authorList>
    </citation>
    <scope>NUCLEOTIDE SEQUENCE [LARGE SCALE GENOMIC DNA]</scope>
    <source>
        <strain>BCG / Tokyo 172 / ATCC 35737 / TMC 1019</strain>
    </source>
</reference>
<dbReference type="EMBL" id="AP010918">
    <property type="protein sequence ID" value="BAH25628.1"/>
    <property type="molecule type" value="Genomic_DNA"/>
</dbReference>
<dbReference type="RefSeq" id="WP_003406686.1">
    <property type="nucleotide sequence ID" value="NZ_CP014566.1"/>
</dbReference>
<dbReference type="SMR" id="C1AMU9"/>
<dbReference type="KEGG" id="mbt:JTY_1340"/>
<dbReference type="HOGENOM" id="CLU_148047_1_2_11"/>
<dbReference type="GO" id="GO:0005886">
    <property type="term" value="C:plasma membrane"/>
    <property type="evidence" value="ECO:0007669"/>
    <property type="project" value="UniProtKB-SubCell"/>
</dbReference>
<dbReference type="GO" id="GO:0045259">
    <property type="term" value="C:proton-transporting ATP synthase complex"/>
    <property type="evidence" value="ECO:0007669"/>
    <property type="project" value="UniProtKB-KW"/>
</dbReference>
<dbReference type="GO" id="GO:0033177">
    <property type="term" value="C:proton-transporting two-sector ATPase complex, proton-transporting domain"/>
    <property type="evidence" value="ECO:0007669"/>
    <property type="project" value="InterPro"/>
</dbReference>
<dbReference type="GO" id="GO:0008289">
    <property type="term" value="F:lipid binding"/>
    <property type="evidence" value="ECO:0007669"/>
    <property type="project" value="UniProtKB-KW"/>
</dbReference>
<dbReference type="GO" id="GO:0046933">
    <property type="term" value="F:proton-transporting ATP synthase activity, rotational mechanism"/>
    <property type="evidence" value="ECO:0007669"/>
    <property type="project" value="UniProtKB-UniRule"/>
</dbReference>
<dbReference type="CDD" id="cd18185">
    <property type="entry name" value="ATP-synt_Fo_c_ATPE"/>
    <property type="match status" value="1"/>
</dbReference>
<dbReference type="FunFam" id="1.20.20.10:FF:000010">
    <property type="entry name" value="ATP synthase subunit c"/>
    <property type="match status" value="1"/>
</dbReference>
<dbReference type="Gene3D" id="1.20.20.10">
    <property type="entry name" value="F1F0 ATP synthase subunit C"/>
    <property type="match status" value="1"/>
</dbReference>
<dbReference type="HAMAP" id="MF_01396">
    <property type="entry name" value="ATP_synth_c_bact"/>
    <property type="match status" value="1"/>
</dbReference>
<dbReference type="InterPro" id="IPR005953">
    <property type="entry name" value="ATP_synth_csu_bac/chlpt"/>
</dbReference>
<dbReference type="InterPro" id="IPR000454">
    <property type="entry name" value="ATP_synth_F0_csu"/>
</dbReference>
<dbReference type="InterPro" id="IPR020537">
    <property type="entry name" value="ATP_synth_F0_csu_DDCD_BS"/>
</dbReference>
<dbReference type="InterPro" id="IPR038662">
    <property type="entry name" value="ATP_synth_F0_csu_sf"/>
</dbReference>
<dbReference type="InterPro" id="IPR002379">
    <property type="entry name" value="ATPase_proteolipid_c-like_dom"/>
</dbReference>
<dbReference type="InterPro" id="IPR035921">
    <property type="entry name" value="F/V-ATP_Csub_sf"/>
</dbReference>
<dbReference type="NCBIfam" id="TIGR01260">
    <property type="entry name" value="ATP_synt_c"/>
    <property type="match status" value="1"/>
</dbReference>
<dbReference type="NCBIfam" id="NF004532">
    <property type="entry name" value="PRK05880.1"/>
    <property type="match status" value="1"/>
</dbReference>
<dbReference type="Pfam" id="PF00137">
    <property type="entry name" value="ATP-synt_C"/>
    <property type="match status" value="1"/>
</dbReference>
<dbReference type="PRINTS" id="PR00124">
    <property type="entry name" value="ATPASEC"/>
</dbReference>
<dbReference type="SUPFAM" id="SSF81333">
    <property type="entry name" value="F1F0 ATP synthase subunit C"/>
    <property type="match status" value="1"/>
</dbReference>
<dbReference type="PROSITE" id="PS00605">
    <property type="entry name" value="ATPASE_C"/>
    <property type="match status" value="1"/>
</dbReference>